<name>CH60_LYSSC</name>
<comment type="function">
    <text evidence="1">Together with its co-chaperonin GroES, plays an essential role in assisting protein folding. The GroEL-GroES system forms a nano-cage that allows encapsulation of the non-native substrate proteins and provides a physical environment optimized to promote and accelerate protein folding.</text>
</comment>
<comment type="catalytic activity">
    <reaction evidence="1">
        <text>ATP + H2O + a folded polypeptide = ADP + phosphate + an unfolded polypeptide.</text>
        <dbReference type="EC" id="5.6.1.7"/>
    </reaction>
</comment>
<comment type="subunit">
    <text evidence="1">Forms a cylinder of 14 subunits composed of two heptameric rings stacked back-to-back. Interacts with the co-chaperonin GroES.</text>
</comment>
<comment type="subcellular location">
    <subcellularLocation>
        <location evidence="1">Cytoplasm</location>
    </subcellularLocation>
</comment>
<comment type="similarity">
    <text evidence="1">Belongs to the chaperonin (HSP60) family.</text>
</comment>
<reference key="1">
    <citation type="journal article" date="2008" name="J. Bacteriol.">
        <title>Complete genome sequence of the mosquitocidal bacterium Bacillus sphaericus C3-41 and comparison with those of closely related Bacillus species.</title>
        <authorList>
            <person name="Hu X."/>
            <person name="Fan W."/>
            <person name="Han B."/>
            <person name="Liu H."/>
            <person name="Zheng D."/>
            <person name="Li Q."/>
            <person name="Dong W."/>
            <person name="Yan J."/>
            <person name="Gao M."/>
            <person name="Berry C."/>
            <person name="Yuan Z."/>
        </authorList>
    </citation>
    <scope>NUCLEOTIDE SEQUENCE [LARGE SCALE GENOMIC DNA]</scope>
    <source>
        <strain>C3-41</strain>
    </source>
</reference>
<gene>
    <name evidence="1" type="primary">groEL</name>
    <name evidence="1" type="synonym">groL</name>
    <name type="ordered locus">Bsph_0133</name>
</gene>
<organism>
    <name type="scientific">Lysinibacillus sphaericus (strain C3-41)</name>
    <dbReference type="NCBI Taxonomy" id="444177"/>
    <lineage>
        <taxon>Bacteria</taxon>
        <taxon>Bacillati</taxon>
        <taxon>Bacillota</taxon>
        <taxon>Bacilli</taxon>
        <taxon>Bacillales</taxon>
        <taxon>Bacillaceae</taxon>
        <taxon>Lysinibacillus</taxon>
    </lineage>
</organism>
<evidence type="ECO:0000255" key="1">
    <source>
        <dbReference type="HAMAP-Rule" id="MF_00600"/>
    </source>
</evidence>
<feature type="chain" id="PRO_1000130035" description="Chaperonin GroEL">
    <location>
        <begin position="1"/>
        <end position="544"/>
    </location>
</feature>
<feature type="binding site" evidence="1">
    <location>
        <begin position="29"/>
        <end position="32"/>
    </location>
    <ligand>
        <name>ATP</name>
        <dbReference type="ChEBI" id="CHEBI:30616"/>
    </ligand>
</feature>
<feature type="binding site" evidence="1">
    <location>
        <begin position="86"/>
        <end position="90"/>
    </location>
    <ligand>
        <name>ATP</name>
        <dbReference type="ChEBI" id="CHEBI:30616"/>
    </ligand>
</feature>
<feature type="binding site" evidence="1">
    <location>
        <position position="413"/>
    </location>
    <ligand>
        <name>ATP</name>
        <dbReference type="ChEBI" id="CHEBI:30616"/>
    </ligand>
</feature>
<feature type="binding site" evidence="1">
    <location>
        <begin position="478"/>
        <end position="480"/>
    </location>
    <ligand>
        <name>ATP</name>
        <dbReference type="ChEBI" id="CHEBI:30616"/>
    </ligand>
</feature>
<feature type="binding site" evidence="1">
    <location>
        <position position="494"/>
    </location>
    <ligand>
        <name>ATP</name>
        <dbReference type="ChEBI" id="CHEBI:30616"/>
    </ligand>
</feature>
<sequence>MAKDIKFSEDARSLMLQGVDKLANAVKITLGPKGRNVVLEKKFGSPLITNDGVTIAKEIELENPYENMGAKLVAEVASKTNEIAGDGTTTATVLAQAIIREGLKNVTAGANPVGIRKGIDKAVAAALTELHTISRPVSNKDEIAQVAAISAADDEVGQLIAEAMERVGNDGVITIEESKGFTTELDVVEGMQFDRGYASHYMVTDTDKMEAVLDNPYILITDKKITNIQEVLPLLEQVVQQGRPLLIIAEDVEGEALATLVVNKLRGTFNAVAVKAPGFGDRRKAMLEDIAILTGGQVITEELGLDLKSADISSLGRAAKVVVTKDNTTIVEGVGGADAIEARIGQIRAQLAETTSEFDKEKLQERLAKLAGGVAVIKVGAATETELKERKLRIEDALNSTRAAVEEGIVSGGGTALLNVYAAVEKVSESEEGDVATGVKIVLRALEEPVRQIANNAGLEGSIIVDRLKREEIGIGFNAATGEWVNMMEAGVVDPAKVTRSALQNAASVAALFLTTEAVVADIPEPAGAGMPDMSGMGGMPGMM</sequence>
<dbReference type="EC" id="5.6.1.7" evidence="1"/>
<dbReference type="EMBL" id="CP000817">
    <property type="protein sequence ID" value="ACA37769.1"/>
    <property type="molecule type" value="Genomic_DNA"/>
</dbReference>
<dbReference type="RefSeq" id="WP_012291939.1">
    <property type="nucleotide sequence ID" value="NC_010382.1"/>
</dbReference>
<dbReference type="SMR" id="B1HT15"/>
<dbReference type="EnsemblBacteria" id="ACA37769">
    <property type="protein sequence ID" value="ACA37769"/>
    <property type="gene ID" value="Bsph_0133"/>
</dbReference>
<dbReference type="KEGG" id="lsp:Bsph_0133"/>
<dbReference type="HOGENOM" id="CLU_016503_3_0_9"/>
<dbReference type="Proteomes" id="UP000002164">
    <property type="component" value="Chromosome"/>
</dbReference>
<dbReference type="GO" id="GO:0005737">
    <property type="term" value="C:cytoplasm"/>
    <property type="evidence" value="ECO:0007669"/>
    <property type="project" value="UniProtKB-SubCell"/>
</dbReference>
<dbReference type="GO" id="GO:0005524">
    <property type="term" value="F:ATP binding"/>
    <property type="evidence" value="ECO:0007669"/>
    <property type="project" value="UniProtKB-UniRule"/>
</dbReference>
<dbReference type="GO" id="GO:0140662">
    <property type="term" value="F:ATP-dependent protein folding chaperone"/>
    <property type="evidence" value="ECO:0007669"/>
    <property type="project" value="InterPro"/>
</dbReference>
<dbReference type="GO" id="GO:0016853">
    <property type="term" value="F:isomerase activity"/>
    <property type="evidence" value="ECO:0007669"/>
    <property type="project" value="UniProtKB-KW"/>
</dbReference>
<dbReference type="GO" id="GO:0051082">
    <property type="term" value="F:unfolded protein binding"/>
    <property type="evidence" value="ECO:0007669"/>
    <property type="project" value="UniProtKB-UniRule"/>
</dbReference>
<dbReference type="GO" id="GO:0042026">
    <property type="term" value="P:protein refolding"/>
    <property type="evidence" value="ECO:0007669"/>
    <property type="project" value="UniProtKB-UniRule"/>
</dbReference>
<dbReference type="CDD" id="cd03344">
    <property type="entry name" value="GroEL"/>
    <property type="match status" value="1"/>
</dbReference>
<dbReference type="FunFam" id="3.50.7.10:FF:000001">
    <property type="entry name" value="60 kDa chaperonin"/>
    <property type="match status" value="1"/>
</dbReference>
<dbReference type="Gene3D" id="3.50.7.10">
    <property type="entry name" value="GroEL"/>
    <property type="match status" value="1"/>
</dbReference>
<dbReference type="Gene3D" id="1.10.560.10">
    <property type="entry name" value="GroEL-like equatorial domain"/>
    <property type="match status" value="1"/>
</dbReference>
<dbReference type="Gene3D" id="3.30.260.10">
    <property type="entry name" value="TCP-1-like chaperonin intermediate domain"/>
    <property type="match status" value="1"/>
</dbReference>
<dbReference type="HAMAP" id="MF_00600">
    <property type="entry name" value="CH60"/>
    <property type="match status" value="1"/>
</dbReference>
<dbReference type="InterPro" id="IPR018370">
    <property type="entry name" value="Chaperonin_Cpn60_CS"/>
</dbReference>
<dbReference type="InterPro" id="IPR001844">
    <property type="entry name" value="Cpn60/GroEL"/>
</dbReference>
<dbReference type="InterPro" id="IPR002423">
    <property type="entry name" value="Cpn60/GroEL/TCP-1"/>
</dbReference>
<dbReference type="InterPro" id="IPR027409">
    <property type="entry name" value="GroEL-like_apical_dom_sf"/>
</dbReference>
<dbReference type="InterPro" id="IPR027413">
    <property type="entry name" value="GROEL-like_equatorial_sf"/>
</dbReference>
<dbReference type="InterPro" id="IPR027410">
    <property type="entry name" value="TCP-1-like_intermed_sf"/>
</dbReference>
<dbReference type="NCBIfam" id="TIGR02348">
    <property type="entry name" value="GroEL"/>
    <property type="match status" value="1"/>
</dbReference>
<dbReference type="NCBIfam" id="NF000592">
    <property type="entry name" value="PRK00013.1"/>
    <property type="match status" value="1"/>
</dbReference>
<dbReference type="NCBIfam" id="NF009487">
    <property type="entry name" value="PRK12849.1"/>
    <property type="match status" value="1"/>
</dbReference>
<dbReference type="NCBIfam" id="NF009488">
    <property type="entry name" value="PRK12850.1"/>
    <property type="match status" value="1"/>
</dbReference>
<dbReference type="NCBIfam" id="NF009489">
    <property type="entry name" value="PRK12851.1"/>
    <property type="match status" value="1"/>
</dbReference>
<dbReference type="PANTHER" id="PTHR45633">
    <property type="entry name" value="60 KDA HEAT SHOCK PROTEIN, MITOCHONDRIAL"/>
    <property type="match status" value="1"/>
</dbReference>
<dbReference type="Pfam" id="PF00118">
    <property type="entry name" value="Cpn60_TCP1"/>
    <property type="match status" value="1"/>
</dbReference>
<dbReference type="PRINTS" id="PR00298">
    <property type="entry name" value="CHAPERONIN60"/>
</dbReference>
<dbReference type="SUPFAM" id="SSF52029">
    <property type="entry name" value="GroEL apical domain-like"/>
    <property type="match status" value="1"/>
</dbReference>
<dbReference type="SUPFAM" id="SSF48592">
    <property type="entry name" value="GroEL equatorial domain-like"/>
    <property type="match status" value="1"/>
</dbReference>
<dbReference type="SUPFAM" id="SSF54849">
    <property type="entry name" value="GroEL-intermediate domain like"/>
    <property type="match status" value="1"/>
</dbReference>
<dbReference type="PROSITE" id="PS00296">
    <property type="entry name" value="CHAPERONINS_CPN60"/>
    <property type="match status" value="1"/>
</dbReference>
<keyword id="KW-0067">ATP-binding</keyword>
<keyword id="KW-0143">Chaperone</keyword>
<keyword id="KW-0963">Cytoplasm</keyword>
<keyword id="KW-0413">Isomerase</keyword>
<keyword id="KW-0547">Nucleotide-binding</keyword>
<protein>
    <recommendedName>
        <fullName evidence="1">Chaperonin GroEL</fullName>
        <ecNumber evidence="1">5.6.1.7</ecNumber>
    </recommendedName>
    <alternativeName>
        <fullName evidence="1">60 kDa chaperonin</fullName>
    </alternativeName>
    <alternativeName>
        <fullName evidence="1">Chaperonin-60</fullName>
        <shortName evidence="1">Cpn60</shortName>
    </alternativeName>
</protein>
<proteinExistence type="inferred from homology"/>
<accession>B1HT15</accession>